<gene>
    <name evidence="1" type="primary">gatA</name>
    <name type="ordered locus">Abu_1022</name>
</gene>
<organism>
    <name type="scientific">Aliarcobacter butzleri (strain RM4018)</name>
    <name type="common">Arcobacter butzleri</name>
    <dbReference type="NCBI Taxonomy" id="367737"/>
    <lineage>
        <taxon>Bacteria</taxon>
        <taxon>Pseudomonadati</taxon>
        <taxon>Campylobacterota</taxon>
        <taxon>Epsilonproteobacteria</taxon>
        <taxon>Campylobacterales</taxon>
        <taxon>Arcobacteraceae</taxon>
        <taxon>Aliarcobacter</taxon>
    </lineage>
</organism>
<evidence type="ECO:0000255" key="1">
    <source>
        <dbReference type="HAMAP-Rule" id="MF_00120"/>
    </source>
</evidence>
<accession>A8ETK8</accession>
<comment type="function">
    <text evidence="1">Allows the formation of correctly charged Gln-tRNA(Gln) through the transamidation of misacylated Glu-tRNA(Gln) in organisms which lack glutaminyl-tRNA synthetase. The reaction takes place in the presence of glutamine and ATP through an activated gamma-phospho-Glu-tRNA(Gln).</text>
</comment>
<comment type="catalytic activity">
    <reaction evidence="1">
        <text>L-glutamyl-tRNA(Gln) + L-glutamine + ATP + H2O = L-glutaminyl-tRNA(Gln) + L-glutamate + ADP + phosphate + H(+)</text>
        <dbReference type="Rhea" id="RHEA:17521"/>
        <dbReference type="Rhea" id="RHEA-COMP:9681"/>
        <dbReference type="Rhea" id="RHEA-COMP:9684"/>
        <dbReference type="ChEBI" id="CHEBI:15377"/>
        <dbReference type="ChEBI" id="CHEBI:15378"/>
        <dbReference type="ChEBI" id="CHEBI:29985"/>
        <dbReference type="ChEBI" id="CHEBI:30616"/>
        <dbReference type="ChEBI" id="CHEBI:43474"/>
        <dbReference type="ChEBI" id="CHEBI:58359"/>
        <dbReference type="ChEBI" id="CHEBI:78520"/>
        <dbReference type="ChEBI" id="CHEBI:78521"/>
        <dbReference type="ChEBI" id="CHEBI:456216"/>
        <dbReference type="EC" id="6.3.5.7"/>
    </reaction>
</comment>
<comment type="subunit">
    <text evidence="1">Heterotrimer of A, B and C subunits.</text>
</comment>
<comment type="similarity">
    <text evidence="1">Belongs to the amidase family. GatA subfamily.</text>
</comment>
<proteinExistence type="inferred from homology"/>
<reference key="1">
    <citation type="journal article" date="2007" name="PLoS ONE">
        <title>The complete genome sequence and analysis of the Epsilonproteobacterium Arcobacter butzleri.</title>
        <authorList>
            <person name="Miller W.G."/>
            <person name="Parker C.T."/>
            <person name="Rubenfield M."/>
            <person name="Mendz G.L."/>
            <person name="Woesten M.M.S.M."/>
            <person name="Ussery D.W."/>
            <person name="Stolz J.F."/>
            <person name="Binnewies T.T."/>
            <person name="Hallin P.F."/>
            <person name="Wang G."/>
            <person name="Malek J.A."/>
            <person name="Rogosin A."/>
            <person name="Stanker L.H."/>
            <person name="Mandrell R.E."/>
        </authorList>
    </citation>
    <scope>NUCLEOTIDE SEQUENCE [LARGE SCALE GENOMIC DNA]</scope>
    <source>
        <strain>RM4018</strain>
    </source>
</reference>
<sequence length="453" mass="48811">MMTLKEALSLASDDIKKLRDDLTLKIKESKIGAYVEQLTSTDISQSGVGIPIAIKDNINVKNWEITCSSNILKGYISPYNATVIEKLEKAGLSPFGRTNMDEFAMGSSTESSCYGKTLNPIDNEKVPGGSSGGSAAAVAGGIAIAALGTDTGGSIRQPAAYCGCVGMKPTYGRVSRYGITAYSSSLDQCGPITQNVEDAAILYDIISGYDPMDSTSANINYEAVTPKLNSDKKLTIAVIDNFVSQASPAIQKGFQKAVNALEEGGHKIIHKNMLDTQKIVSTYYIVATAEASANLARFDGVRFGNRKGESGLKDMYVQTKSQGFGHEVQKRIMLGSFVLSSGYYDAYYIKAQKVRHLIKDEYSKIFSEADLILSPVAPTTAPKFGSFKTSLEMYLSDIYTISVNLAGLPAISLPVDKDEDGMPIGLQFIANAYEEQTLFDGALSLEKAINYKK</sequence>
<feature type="chain" id="PRO_1000057794" description="Glutamyl-tRNA(Gln) amidotransferase subunit A">
    <location>
        <begin position="1"/>
        <end position="453"/>
    </location>
</feature>
<feature type="active site" description="Charge relay system" evidence="1">
    <location>
        <position position="55"/>
    </location>
</feature>
<feature type="active site" description="Charge relay system" evidence="1">
    <location>
        <position position="130"/>
    </location>
</feature>
<feature type="active site" description="Acyl-ester intermediate" evidence="1">
    <location>
        <position position="154"/>
    </location>
</feature>
<dbReference type="EC" id="6.3.5.7" evidence="1"/>
<dbReference type="EMBL" id="CP000361">
    <property type="protein sequence ID" value="ABV67282.1"/>
    <property type="molecule type" value="Genomic_DNA"/>
</dbReference>
<dbReference type="RefSeq" id="WP_012012729.1">
    <property type="nucleotide sequence ID" value="NC_009850.1"/>
</dbReference>
<dbReference type="SMR" id="A8ETK8"/>
<dbReference type="STRING" id="367737.Abu_1022"/>
<dbReference type="GeneID" id="24303459"/>
<dbReference type="KEGG" id="abu:Abu_1022"/>
<dbReference type="eggNOG" id="COG0154">
    <property type="taxonomic scope" value="Bacteria"/>
</dbReference>
<dbReference type="HOGENOM" id="CLU_009600_0_3_7"/>
<dbReference type="Proteomes" id="UP000001136">
    <property type="component" value="Chromosome"/>
</dbReference>
<dbReference type="GO" id="GO:0030956">
    <property type="term" value="C:glutamyl-tRNA(Gln) amidotransferase complex"/>
    <property type="evidence" value="ECO:0007669"/>
    <property type="project" value="InterPro"/>
</dbReference>
<dbReference type="GO" id="GO:0005524">
    <property type="term" value="F:ATP binding"/>
    <property type="evidence" value="ECO:0007669"/>
    <property type="project" value="UniProtKB-KW"/>
</dbReference>
<dbReference type="GO" id="GO:0050567">
    <property type="term" value="F:glutaminyl-tRNA synthase (glutamine-hydrolyzing) activity"/>
    <property type="evidence" value="ECO:0007669"/>
    <property type="project" value="UniProtKB-UniRule"/>
</dbReference>
<dbReference type="GO" id="GO:0006412">
    <property type="term" value="P:translation"/>
    <property type="evidence" value="ECO:0007669"/>
    <property type="project" value="UniProtKB-UniRule"/>
</dbReference>
<dbReference type="Gene3D" id="3.90.1300.10">
    <property type="entry name" value="Amidase signature (AS) domain"/>
    <property type="match status" value="1"/>
</dbReference>
<dbReference type="HAMAP" id="MF_00120">
    <property type="entry name" value="GatA"/>
    <property type="match status" value="1"/>
</dbReference>
<dbReference type="InterPro" id="IPR000120">
    <property type="entry name" value="Amidase"/>
</dbReference>
<dbReference type="InterPro" id="IPR020556">
    <property type="entry name" value="Amidase_CS"/>
</dbReference>
<dbReference type="InterPro" id="IPR023631">
    <property type="entry name" value="Amidase_dom"/>
</dbReference>
<dbReference type="InterPro" id="IPR036928">
    <property type="entry name" value="AS_sf"/>
</dbReference>
<dbReference type="InterPro" id="IPR004412">
    <property type="entry name" value="GatA"/>
</dbReference>
<dbReference type="NCBIfam" id="TIGR00132">
    <property type="entry name" value="gatA"/>
    <property type="match status" value="1"/>
</dbReference>
<dbReference type="PANTHER" id="PTHR11895:SF151">
    <property type="entry name" value="GLUTAMYL-TRNA(GLN) AMIDOTRANSFERASE SUBUNIT A"/>
    <property type="match status" value="1"/>
</dbReference>
<dbReference type="PANTHER" id="PTHR11895">
    <property type="entry name" value="TRANSAMIDASE"/>
    <property type="match status" value="1"/>
</dbReference>
<dbReference type="Pfam" id="PF01425">
    <property type="entry name" value="Amidase"/>
    <property type="match status" value="1"/>
</dbReference>
<dbReference type="SUPFAM" id="SSF75304">
    <property type="entry name" value="Amidase signature (AS) enzymes"/>
    <property type="match status" value="1"/>
</dbReference>
<dbReference type="PROSITE" id="PS00571">
    <property type="entry name" value="AMIDASES"/>
    <property type="match status" value="1"/>
</dbReference>
<protein>
    <recommendedName>
        <fullName evidence="1">Glutamyl-tRNA(Gln) amidotransferase subunit A</fullName>
        <shortName evidence="1">Glu-ADT subunit A</shortName>
        <ecNumber evidence="1">6.3.5.7</ecNumber>
    </recommendedName>
</protein>
<name>GATA_ALIB4</name>
<keyword id="KW-0067">ATP-binding</keyword>
<keyword id="KW-0436">Ligase</keyword>
<keyword id="KW-0547">Nucleotide-binding</keyword>
<keyword id="KW-0648">Protein biosynthesis</keyword>
<keyword id="KW-1185">Reference proteome</keyword>